<feature type="propeptide" id="PRO_0000009389" evidence="2">
    <location>
        <begin position="1"/>
        <end position="12"/>
    </location>
</feature>
<feature type="chain" id="PRO_0000009390" description="Flagellin B2">
    <location>
        <begin position="13"/>
        <end position="216"/>
    </location>
</feature>
<feature type="glycosylation site" description="N-linked (GlcNAc...) asparagine" evidence="1">
    <location>
        <position position="38"/>
    </location>
</feature>
<feature type="glycosylation site" description="N-linked (GlcNAc...) asparagine" evidence="1">
    <location>
        <position position="72"/>
    </location>
</feature>
<feature type="glycosylation site" description="N-linked (GlcNAc...) asparagine" evidence="1">
    <location>
        <position position="77"/>
    </location>
</feature>
<feature type="glycosylation site" description="N-linked (GlcNAc...) asparagine" evidence="1">
    <location>
        <position position="113"/>
    </location>
</feature>
<feature type="glycosylation site" description="N-linked (GlcNAc...) asparagine" evidence="1">
    <location>
        <position position="172"/>
    </location>
</feature>
<feature type="glycosylation site" description="N-linked (GlcNAc...) asparagine" evidence="1">
    <location>
        <position position="208"/>
    </location>
</feature>
<keyword id="KW-0974">Archaeal flagellum</keyword>
<keyword id="KW-0903">Direct protein sequencing</keyword>
<keyword id="KW-0325">Glycoprotein</keyword>
<proteinExistence type="evidence at protein level"/>
<organism>
    <name type="scientific">Methanococcus voltae</name>
    <dbReference type="NCBI Taxonomy" id="2188"/>
    <lineage>
        <taxon>Archaea</taxon>
        <taxon>Methanobacteriati</taxon>
        <taxon>Methanobacteriota</taxon>
        <taxon>Methanomada group</taxon>
        <taxon>Methanococci</taxon>
        <taxon>Methanococcales</taxon>
        <taxon>Methanococcaceae</taxon>
        <taxon>Methanococcus</taxon>
    </lineage>
</organism>
<sequence length="216" mass="22799">MKIKEFMSNKKGASGIGTLIVFIAMVLVAAVAASVLINTSGFLQQKASTTGKESTEQVASGLQISQVMGMHNNSNINKTAIYISPNAGSSAIDLSQAVIMLSDGSNKRVYKYNESSYKDLTNGGDIFDNANVEWIKATATKFGIVVIQDADESCTAANPVINKGDLVAITLNTTSFSTTPRTSITGTVQPEFGAPGIISFTTPATYLNDSKVVQLQ</sequence>
<accession>P27804</accession>
<accession>P17602</accession>
<dbReference type="EMBL" id="M72148">
    <property type="protein sequence ID" value="AAA73075.1"/>
    <property type="molecule type" value="Genomic_DNA"/>
</dbReference>
<dbReference type="PIR" id="C41316">
    <property type="entry name" value="C41316"/>
</dbReference>
<dbReference type="SMR" id="P27804"/>
<dbReference type="GlyCosmos" id="P27804">
    <property type="glycosylation" value="6 sites, No reported glycans"/>
</dbReference>
<dbReference type="iPTMnet" id="P27804"/>
<dbReference type="GO" id="GO:0097589">
    <property type="term" value="C:archaeal-type flagellum"/>
    <property type="evidence" value="ECO:0007669"/>
    <property type="project" value="UniProtKB-SubCell"/>
</dbReference>
<dbReference type="GO" id="GO:0005198">
    <property type="term" value="F:structural molecule activity"/>
    <property type="evidence" value="ECO:0007669"/>
    <property type="project" value="InterPro"/>
</dbReference>
<dbReference type="GO" id="GO:0097588">
    <property type="term" value="P:archaeal or bacterial-type flagellum-dependent cell motility"/>
    <property type="evidence" value="ECO:0007669"/>
    <property type="project" value="InterPro"/>
</dbReference>
<dbReference type="InterPro" id="IPR013373">
    <property type="entry name" value="Flagellin/pilin_N_arc"/>
</dbReference>
<dbReference type="InterPro" id="IPR002774">
    <property type="entry name" value="Flagellin_arc"/>
</dbReference>
<dbReference type="NCBIfam" id="TIGR02537">
    <property type="entry name" value="arch_flag_Nterm"/>
    <property type="match status" value="1"/>
</dbReference>
<dbReference type="NCBIfam" id="NF006325">
    <property type="entry name" value="PRK08541.1"/>
    <property type="match status" value="1"/>
</dbReference>
<dbReference type="PANTHER" id="PTHR35903">
    <property type="entry name" value="FLAGELLIN B1"/>
    <property type="match status" value="1"/>
</dbReference>
<dbReference type="PANTHER" id="PTHR35903:SF1">
    <property type="entry name" value="FLAGELLIN B1"/>
    <property type="match status" value="1"/>
</dbReference>
<dbReference type="Pfam" id="PF01917">
    <property type="entry name" value="Arch_flagellin"/>
    <property type="match status" value="1"/>
</dbReference>
<evidence type="ECO:0000269" key="1">
    <source>
    </source>
</evidence>
<evidence type="ECO:0000269" key="2">
    <source>
    </source>
</evidence>
<evidence type="ECO:0000305" key="3"/>
<reference key="1">
    <citation type="journal article" date="1991" name="J. Bacteriol.">
        <title>Cloning and sequencing of a multigene family encoding the flagellins of Methanococcus voltae.</title>
        <authorList>
            <person name="Kalmokoff M.L."/>
            <person name="Jarrell K.F."/>
        </authorList>
    </citation>
    <scope>NUCLEOTIDE SEQUENCE [GENOMIC DNA]</scope>
    <source>
        <strain>ATCC 33273 / DSM 1537 / NBRC 100457 / OCM 70 / PS</strain>
    </source>
</reference>
<reference key="2">
    <citation type="journal article" date="1990" name="Biochem. Biophys. Res. Commun.">
        <title>Conserved N-terminal sequences in the flagellins of archaebacteria.</title>
        <authorList>
            <person name="Kalmokoff M.L."/>
            <person name="Karnauchow T.M."/>
            <person name="Jarrell K.F."/>
        </authorList>
    </citation>
    <scope>PROTEIN SEQUENCE OF 13-32</scope>
    <source>
        <strain>ATCC 33273 / DSM 1537 / NBRC 100457 / OCM 70 / PS</strain>
    </source>
</reference>
<reference key="3">
    <citation type="journal article" date="2005" name="J. Biol. Chem.">
        <title>Identification and characterization of the unique N-linked glycan common to the flagellins and S-layer glycoprotein of Methanococcus voltae.</title>
        <authorList>
            <person name="Voisin S."/>
            <person name="Houliston R.S."/>
            <person name="Kelly J."/>
            <person name="Brisson J.-R."/>
            <person name="Watson D."/>
            <person name="Bardy S.L."/>
            <person name="Jarrell K.F."/>
            <person name="Logan S.M."/>
        </authorList>
    </citation>
    <scope>PROTEIN SEQUENCE OF 112-118</scope>
    <scope>GLYCOSYLATION AT ASN-38; ASN-72; ASN-77; ASN-113; ASN-172 AND ASN-208</scope>
    <scope>GLYCAN STRUCTURE</scope>
    <scope>IDENTIFICATION BY MASS SPECTROMETRY</scope>
    <source>
        <strain>ATCC 33273 / DSM 1537 / NBRC 100457 / OCM 70 / PS</strain>
    </source>
</reference>
<protein>
    <recommendedName>
        <fullName>Flagellin B2</fullName>
    </recommendedName>
</protein>
<gene>
    <name type="primary">flaB2</name>
</gene>
<comment type="function">
    <text>Flagellin is the subunit protein which polymerizes to form the filaments of archaeal flagella.</text>
</comment>
<comment type="subcellular location">
    <subcellularLocation>
        <location>Archaeal flagellum</location>
    </subcellularLocation>
</comment>
<comment type="PTM">
    <text evidence="1">N-linked glycans consist of the 779 Da trisaccharide beta-ManNAc(Thr)-(1-4)-beta-GlcNAc3NAcA-(1-3)-beta-GlcNAc.</text>
</comment>
<comment type="similarity">
    <text evidence="3">Belongs to the archaeal flagellin family.</text>
</comment>
<name>FLAB2_METVO</name>